<gene>
    <name evidence="1" type="primary">psd</name>
    <name type="ordered locus">XOO3264</name>
</gene>
<accession>Q5GXQ3</accession>
<comment type="function">
    <text evidence="1">Catalyzes the formation of phosphatidylethanolamine (PtdEtn) from phosphatidylserine (PtdSer).</text>
</comment>
<comment type="catalytic activity">
    <reaction evidence="1">
        <text>a 1,2-diacyl-sn-glycero-3-phospho-L-serine + H(+) = a 1,2-diacyl-sn-glycero-3-phosphoethanolamine + CO2</text>
        <dbReference type="Rhea" id="RHEA:20828"/>
        <dbReference type="ChEBI" id="CHEBI:15378"/>
        <dbReference type="ChEBI" id="CHEBI:16526"/>
        <dbReference type="ChEBI" id="CHEBI:57262"/>
        <dbReference type="ChEBI" id="CHEBI:64612"/>
        <dbReference type="EC" id="4.1.1.65"/>
    </reaction>
</comment>
<comment type="cofactor">
    <cofactor evidence="1">
        <name>pyruvate</name>
        <dbReference type="ChEBI" id="CHEBI:15361"/>
    </cofactor>
    <text evidence="1">Binds 1 pyruvoyl group covalently per subunit.</text>
</comment>
<comment type="pathway">
    <text evidence="1">Phospholipid metabolism; phosphatidylethanolamine biosynthesis; phosphatidylethanolamine from CDP-diacylglycerol: step 2/2.</text>
</comment>
<comment type="subunit">
    <text evidence="1">Heterodimer of a large membrane-associated beta subunit and a small pyruvoyl-containing alpha subunit.</text>
</comment>
<comment type="subcellular location">
    <subcellularLocation>
        <location evidence="1">Cell membrane</location>
        <topology evidence="1">Peripheral membrane protein</topology>
    </subcellularLocation>
</comment>
<comment type="PTM">
    <text evidence="1">Is synthesized initially as an inactive proenzyme. Formation of the active enzyme involves a self-maturation process in which the active site pyruvoyl group is generated from an internal serine residue via an autocatalytic post-translational modification. Two non-identical subunits are generated from the proenzyme in this reaction, and the pyruvate is formed at the N-terminus of the alpha chain, which is derived from the carboxyl end of the proenzyme. The autoendoproteolytic cleavage occurs by a canonical serine protease mechanism, in which the side chain hydroxyl group of the serine supplies its oxygen atom to form the C-terminus of the beta chain, while the remainder of the serine residue undergoes an oxidative deamination to produce ammonia and the pyruvoyl prosthetic group on the alpha chain. During this reaction, the Ser that is part of the protease active site of the proenzyme becomes the pyruvoyl prosthetic group, which constitutes an essential element of the active site of the mature decarboxylase.</text>
</comment>
<comment type="similarity">
    <text evidence="1">Belongs to the phosphatidylserine decarboxylase family. PSD-B subfamily. Prokaryotic type I sub-subfamily.</text>
</comment>
<organism>
    <name type="scientific">Xanthomonas oryzae pv. oryzae (strain KACC10331 / KXO85)</name>
    <dbReference type="NCBI Taxonomy" id="291331"/>
    <lineage>
        <taxon>Bacteria</taxon>
        <taxon>Pseudomonadati</taxon>
        <taxon>Pseudomonadota</taxon>
        <taxon>Gammaproteobacteria</taxon>
        <taxon>Lysobacterales</taxon>
        <taxon>Lysobacteraceae</taxon>
        <taxon>Xanthomonas</taxon>
    </lineage>
</organism>
<sequence>MSLVTSLTYVLPHRLLSSLARALAYSNRPATKQWLIDTVTRKFGVDLSEAQEPDPRAYPTFNAFFTRALKHGARVPDADPAALLMPADGRISQLGPIENGRIFQAKGQSFTAAELLGDAGAAAPFNNGLFATVYLSPKDYHRVHMPWTGTLRTTVHVPGRLFSVGPDAVRNVPRLFARNERLVCHFDTDFGPMASVMVGALLVSGVETVWSGVEIPRYGDRITRKDYRGKGIVLEKFAEMARFNYGSTVIVLLPPGVATLDGGLGAETSVRLGQALARRQLG</sequence>
<proteinExistence type="inferred from homology"/>
<evidence type="ECO:0000255" key="1">
    <source>
        <dbReference type="HAMAP-Rule" id="MF_00662"/>
    </source>
</evidence>
<reference key="1">
    <citation type="journal article" date="2005" name="Nucleic Acids Res.">
        <title>The genome sequence of Xanthomonas oryzae pathovar oryzae KACC10331, the bacterial blight pathogen of rice.</title>
        <authorList>
            <person name="Lee B.-M."/>
            <person name="Park Y.-J."/>
            <person name="Park D.-S."/>
            <person name="Kang H.-W."/>
            <person name="Kim J.-G."/>
            <person name="Song E.-S."/>
            <person name="Park I.-C."/>
            <person name="Yoon U.-H."/>
            <person name="Hahn J.-H."/>
            <person name="Koo B.-S."/>
            <person name="Lee G.-B."/>
            <person name="Kim H."/>
            <person name="Park H.-S."/>
            <person name="Yoon K.-O."/>
            <person name="Kim J.-H."/>
            <person name="Jung C.-H."/>
            <person name="Koh N.-H."/>
            <person name="Seo J.-S."/>
            <person name="Go S.-J."/>
        </authorList>
    </citation>
    <scope>NUCLEOTIDE SEQUENCE [LARGE SCALE GENOMIC DNA]</scope>
    <source>
        <strain>KACC10331 / KXO85</strain>
    </source>
</reference>
<keyword id="KW-1003">Cell membrane</keyword>
<keyword id="KW-0210">Decarboxylase</keyword>
<keyword id="KW-0444">Lipid biosynthesis</keyword>
<keyword id="KW-0443">Lipid metabolism</keyword>
<keyword id="KW-0456">Lyase</keyword>
<keyword id="KW-0472">Membrane</keyword>
<keyword id="KW-0594">Phospholipid biosynthesis</keyword>
<keyword id="KW-1208">Phospholipid metabolism</keyword>
<keyword id="KW-0670">Pyruvate</keyword>
<keyword id="KW-1185">Reference proteome</keyword>
<keyword id="KW-0865">Zymogen</keyword>
<name>PSD_XANOR</name>
<feature type="chain" id="PRO_0000029717" description="Phosphatidylserine decarboxylase beta chain" evidence="1">
    <location>
        <begin position="1"/>
        <end position="246"/>
    </location>
</feature>
<feature type="chain" id="PRO_0000029718" description="Phosphatidylserine decarboxylase alpha chain" evidence="1">
    <location>
        <begin position="247"/>
        <end position="282"/>
    </location>
</feature>
<feature type="active site" description="Charge relay system; for autoendoproteolytic cleavage activity" evidence="1">
    <location>
        <position position="88"/>
    </location>
</feature>
<feature type="active site" description="Charge relay system; for autoendoproteolytic cleavage activity" evidence="1">
    <location>
        <position position="144"/>
    </location>
</feature>
<feature type="active site" description="Charge relay system; for autoendoproteolytic cleavage activity" evidence="1">
    <location>
        <position position="247"/>
    </location>
</feature>
<feature type="active site" description="Schiff-base intermediate with substrate; via pyruvic acid; for decarboxylase activity" evidence="1">
    <location>
        <position position="247"/>
    </location>
</feature>
<feature type="site" description="Cleavage (non-hydrolytic); by autocatalysis" evidence="1">
    <location>
        <begin position="246"/>
        <end position="247"/>
    </location>
</feature>
<feature type="modified residue" description="Pyruvic acid (Ser); by autocatalysis" evidence="1">
    <location>
        <position position="247"/>
    </location>
</feature>
<dbReference type="EC" id="4.1.1.65" evidence="1"/>
<dbReference type="EMBL" id="AE013598">
    <property type="status" value="NOT_ANNOTATED_CDS"/>
    <property type="molecule type" value="Genomic_DNA"/>
</dbReference>
<dbReference type="SMR" id="Q5GXQ3"/>
<dbReference type="UniPathway" id="UPA00558">
    <property type="reaction ID" value="UER00616"/>
</dbReference>
<dbReference type="Proteomes" id="UP000006735">
    <property type="component" value="Chromosome"/>
</dbReference>
<dbReference type="GO" id="GO:0005886">
    <property type="term" value="C:plasma membrane"/>
    <property type="evidence" value="ECO:0007669"/>
    <property type="project" value="UniProtKB-SubCell"/>
</dbReference>
<dbReference type="GO" id="GO:0004609">
    <property type="term" value="F:phosphatidylserine decarboxylase activity"/>
    <property type="evidence" value="ECO:0007669"/>
    <property type="project" value="UniProtKB-UniRule"/>
</dbReference>
<dbReference type="GO" id="GO:0006646">
    <property type="term" value="P:phosphatidylethanolamine biosynthetic process"/>
    <property type="evidence" value="ECO:0007669"/>
    <property type="project" value="UniProtKB-UniRule"/>
</dbReference>
<dbReference type="HAMAP" id="MF_00662">
    <property type="entry name" value="PS_decarb_PSD_B_type1"/>
    <property type="match status" value="1"/>
</dbReference>
<dbReference type="InterPro" id="IPR003817">
    <property type="entry name" value="PS_Dcarbxylase"/>
</dbReference>
<dbReference type="InterPro" id="IPR033177">
    <property type="entry name" value="PSD-B"/>
</dbReference>
<dbReference type="InterPro" id="IPR033178">
    <property type="entry name" value="PSD_type1_pro"/>
</dbReference>
<dbReference type="NCBIfam" id="TIGR00163">
    <property type="entry name" value="PS_decarb"/>
    <property type="match status" value="1"/>
</dbReference>
<dbReference type="PANTHER" id="PTHR10067">
    <property type="entry name" value="PHOSPHATIDYLSERINE DECARBOXYLASE"/>
    <property type="match status" value="1"/>
</dbReference>
<dbReference type="PANTHER" id="PTHR10067:SF6">
    <property type="entry name" value="PHOSPHATIDYLSERINE DECARBOXYLASE PROENZYME, MITOCHONDRIAL"/>
    <property type="match status" value="1"/>
</dbReference>
<dbReference type="Pfam" id="PF02666">
    <property type="entry name" value="PS_Dcarbxylase"/>
    <property type="match status" value="1"/>
</dbReference>
<protein>
    <recommendedName>
        <fullName evidence="1">Phosphatidylserine decarboxylase proenzyme</fullName>
        <ecNumber evidence="1">4.1.1.65</ecNumber>
    </recommendedName>
    <component>
        <recommendedName>
            <fullName evidence="1">Phosphatidylserine decarboxylase alpha chain</fullName>
        </recommendedName>
    </component>
    <component>
        <recommendedName>
            <fullName evidence="1">Phosphatidylserine decarboxylase beta chain</fullName>
        </recommendedName>
    </component>
</protein>